<comment type="function">
    <text evidence="2">GTP hydrolase that promotes the GTP-dependent binding of aminoacyl-tRNA to the A-site of ribosomes during protein biosynthesis.</text>
</comment>
<comment type="catalytic activity">
    <reaction evidence="2">
        <text>GTP + H2O = GDP + phosphate + H(+)</text>
        <dbReference type="Rhea" id="RHEA:19669"/>
        <dbReference type="ChEBI" id="CHEBI:15377"/>
        <dbReference type="ChEBI" id="CHEBI:15378"/>
        <dbReference type="ChEBI" id="CHEBI:37565"/>
        <dbReference type="ChEBI" id="CHEBI:43474"/>
        <dbReference type="ChEBI" id="CHEBI:58189"/>
        <dbReference type="EC" id="3.6.5.3"/>
    </reaction>
    <physiologicalReaction direction="left-to-right" evidence="2">
        <dbReference type="Rhea" id="RHEA:19670"/>
    </physiologicalReaction>
</comment>
<comment type="subunit">
    <text evidence="2">Monomer.</text>
</comment>
<comment type="subcellular location">
    <subcellularLocation>
        <location evidence="2">Cytoplasm</location>
    </subcellularLocation>
</comment>
<comment type="similarity">
    <text evidence="2">Belongs to the TRAFAC class translation factor GTPase superfamily. Classic translation factor GTPase family. EF-Tu/EF-1A subfamily.</text>
</comment>
<proteinExistence type="inferred from homology"/>
<sequence length="394" mass="43406">MANEKFIRNKPHLNVGTIGHVDHGKTTLTAAITQVLSTRGLAKSRAYDQIDNAPEERERGITIKTSHVEYETEKRHYAHVDCPGHADYVKNMITGAAQMDAAILVVSGADSVMPQTREHILLARQVGVPKIVVFLNKCDLSPDEQILELVEMEVRELLSQYDFPGDDIPVIRGSALKALEGDAHYVAQVNELIETLDTYIEDPVREVDKPFLMPVEDVFTITGRGTVVTGRVERGQVKAGDEVEIVGLKETRKTIVTAVEMFKKDLDFAQAGDNVGALLRGINREDVQRGQVLAKPGSVKPHSKFVAQVYVLTKEEGGRHTAFFSQYRPQFYFRTTDITGVVELQGDVKMVMPGDNAELVVTLNNPIAIEEGTKFSIREGGKTVGAGSVSKLLN</sequence>
<dbReference type="EC" id="3.6.5.3" evidence="2"/>
<dbReference type="EMBL" id="AP006628">
    <property type="protein sequence ID" value="BAD04350.1"/>
    <property type="molecule type" value="Genomic_DNA"/>
</dbReference>
<dbReference type="SMR" id="Q6YQV8"/>
<dbReference type="STRING" id="262768.PAM_265"/>
<dbReference type="KEGG" id="poy:PAM_265"/>
<dbReference type="eggNOG" id="COG0050">
    <property type="taxonomic scope" value="Bacteria"/>
</dbReference>
<dbReference type="HOGENOM" id="CLU_007265_0_0_14"/>
<dbReference type="BioCyc" id="OYEL262768:G1G26-322-MONOMER"/>
<dbReference type="Proteomes" id="UP000002523">
    <property type="component" value="Chromosome"/>
</dbReference>
<dbReference type="GO" id="GO:0005829">
    <property type="term" value="C:cytosol"/>
    <property type="evidence" value="ECO:0007669"/>
    <property type="project" value="TreeGrafter"/>
</dbReference>
<dbReference type="GO" id="GO:0005525">
    <property type="term" value="F:GTP binding"/>
    <property type="evidence" value="ECO:0007669"/>
    <property type="project" value="UniProtKB-UniRule"/>
</dbReference>
<dbReference type="GO" id="GO:0003924">
    <property type="term" value="F:GTPase activity"/>
    <property type="evidence" value="ECO:0007669"/>
    <property type="project" value="InterPro"/>
</dbReference>
<dbReference type="GO" id="GO:0003746">
    <property type="term" value="F:translation elongation factor activity"/>
    <property type="evidence" value="ECO:0007669"/>
    <property type="project" value="UniProtKB-UniRule"/>
</dbReference>
<dbReference type="CDD" id="cd01884">
    <property type="entry name" value="EF_Tu"/>
    <property type="match status" value="1"/>
</dbReference>
<dbReference type="CDD" id="cd03697">
    <property type="entry name" value="EFTU_II"/>
    <property type="match status" value="1"/>
</dbReference>
<dbReference type="CDD" id="cd03707">
    <property type="entry name" value="EFTU_III"/>
    <property type="match status" value="1"/>
</dbReference>
<dbReference type="FunFam" id="2.40.30.10:FF:000001">
    <property type="entry name" value="Elongation factor Tu"/>
    <property type="match status" value="1"/>
</dbReference>
<dbReference type="FunFam" id="3.40.50.300:FF:000003">
    <property type="entry name" value="Elongation factor Tu"/>
    <property type="match status" value="1"/>
</dbReference>
<dbReference type="Gene3D" id="3.40.50.300">
    <property type="entry name" value="P-loop containing nucleotide triphosphate hydrolases"/>
    <property type="match status" value="1"/>
</dbReference>
<dbReference type="Gene3D" id="2.40.30.10">
    <property type="entry name" value="Translation factors"/>
    <property type="match status" value="2"/>
</dbReference>
<dbReference type="HAMAP" id="MF_00118_B">
    <property type="entry name" value="EF_Tu_B"/>
    <property type="match status" value="1"/>
</dbReference>
<dbReference type="InterPro" id="IPR041709">
    <property type="entry name" value="EF-Tu_GTP-bd"/>
</dbReference>
<dbReference type="InterPro" id="IPR050055">
    <property type="entry name" value="EF-Tu_GTPase"/>
</dbReference>
<dbReference type="InterPro" id="IPR004161">
    <property type="entry name" value="EFTu-like_2"/>
</dbReference>
<dbReference type="InterPro" id="IPR033720">
    <property type="entry name" value="EFTU_2"/>
</dbReference>
<dbReference type="InterPro" id="IPR031157">
    <property type="entry name" value="G_TR_CS"/>
</dbReference>
<dbReference type="InterPro" id="IPR027417">
    <property type="entry name" value="P-loop_NTPase"/>
</dbReference>
<dbReference type="InterPro" id="IPR005225">
    <property type="entry name" value="Small_GTP-bd"/>
</dbReference>
<dbReference type="InterPro" id="IPR000795">
    <property type="entry name" value="T_Tr_GTP-bd_dom"/>
</dbReference>
<dbReference type="InterPro" id="IPR009000">
    <property type="entry name" value="Transl_B-barrel_sf"/>
</dbReference>
<dbReference type="InterPro" id="IPR009001">
    <property type="entry name" value="Transl_elong_EF1A/Init_IF2_C"/>
</dbReference>
<dbReference type="InterPro" id="IPR004541">
    <property type="entry name" value="Transl_elong_EFTu/EF1A_bac/org"/>
</dbReference>
<dbReference type="InterPro" id="IPR004160">
    <property type="entry name" value="Transl_elong_EFTu/EF1A_C"/>
</dbReference>
<dbReference type="NCBIfam" id="TIGR00485">
    <property type="entry name" value="EF-Tu"/>
    <property type="match status" value="1"/>
</dbReference>
<dbReference type="NCBIfam" id="NF000766">
    <property type="entry name" value="PRK00049.1"/>
    <property type="match status" value="1"/>
</dbReference>
<dbReference type="NCBIfam" id="NF009372">
    <property type="entry name" value="PRK12735.1"/>
    <property type="match status" value="1"/>
</dbReference>
<dbReference type="NCBIfam" id="NF009373">
    <property type="entry name" value="PRK12736.1"/>
    <property type="match status" value="1"/>
</dbReference>
<dbReference type="NCBIfam" id="TIGR00231">
    <property type="entry name" value="small_GTP"/>
    <property type="match status" value="1"/>
</dbReference>
<dbReference type="PANTHER" id="PTHR43721:SF22">
    <property type="entry name" value="ELONGATION FACTOR TU, MITOCHONDRIAL"/>
    <property type="match status" value="1"/>
</dbReference>
<dbReference type="PANTHER" id="PTHR43721">
    <property type="entry name" value="ELONGATION FACTOR TU-RELATED"/>
    <property type="match status" value="1"/>
</dbReference>
<dbReference type="Pfam" id="PF00009">
    <property type="entry name" value="GTP_EFTU"/>
    <property type="match status" value="1"/>
</dbReference>
<dbReference type="Pfam" id="PF03144">
    <property type="entry name" value="GTP_EFTU_D2"/>
    <property type="match status" value="1"/>
</dbReference>
<dbReference type="Pfam" id="PF03143">
    <property type="entry name" value="GTP_EFTU_D3"/>
    <property type="match status" value="1"/>
</dbReference>
<dbReference type="PRINTS" id="PR00315">
    <property type="entry name" value="ELONGATNFCT"/>
</dbReference>
<dbReference type="SUPFAM" id="SSF50465">
    <property type="entry name" value="EF-Tu/eEF-1alpha/eIF2-gamma C-terminal domain"/>
    <property type="match status" value="1"/>
</dbReference>
<dbReference type="SUPFAM" id="SSF52540">
    <property type="entry name" value="P-loop containing nucleoside triphosphate hydrolases"/>
    <property type="match status" value="1"/>
</dbReference>
<dbReference type="SUPFAM" id="SSF50447">
    <property type="entry name" value="Translation proteins"/>
    <property type="match status" value="1"/>
</dbReference>
<dbReference type="PROSITE" id="PS00301">
    <property type="entry name" value="G_TR_1"/>
    <property type="match status" value="1"/>
</dbReference>
<dbReference type="PROSITE" id="PS51722">
    <property type="entry name" value="G_TR_2"/>
    <property type="match status" value="1"/>
</dbReference>
<gene>
    <name evidence="2" type="primary">tuf</name>
    <name type="ordered locus">PAM_265</name>
</gene>
<protein>
    <recommendedName>
        <fullName evidence="2">Elongation factor Tu</fullName>
        <shortName evidence="2">EF-Tu</shortName>
        <ecNumber evidence="2">3.6.5.3</ecNumber>
    </recommendedName>
</protein>
<feature type="chain" id="PRO_1000015716" description="Elongation factor Tu">
    <location>
        <begin position="1"/>
        <end position="394"/>
    </location>
</feature>
<feature type="domain" description="tr-type G">
    <location>
        <begin position="10"/>
        <end position="204"/>
    </location>
</feature>
<feature type="region of interest" description="G1" evidence="1">
    <location>
        <begin position="19"/>
        <end position="26"/>
    </location>
</feature>
<feature type="region of interest" description="G2" evidence="1">
    <location>
        <begin position="60"/>
        <end position="64"/>
    </location>
</feature>
<feature type="region of interest" description="G3" evidence="1">
    <location>
        <begin position="81"/>
        <end position="84"/>
    </location>
</feature>
<feature type="region of interest" description="G4" evidence="1">
    <location>
        <begin position="136"/>
        <end position="139"/>
    </location>
</feature>
<feature type="region of interest" description="G5" evidence="1">
    <location>
        <begin position="174"/>
        <end position="176"/>
    </location>
</feature>
<feature type="binding site" evidence="2">
    <location>
        <begin position="19"/>
        <end position="26"/>
    </location>
    <ligand>
        <name>GTP</name>
        <dbReference type="ChEBI" id="CHEBI:37565"/>
    </ligand>
</feature>
<feature type="binding site" evidence="2">
    <location>
        <position position="26"/>
    </location>
    <ligand>
        <name>Mg(2+)</name>
        <dbReference type="ChEBI" id="CHEBI:18420"/>
    </ligand>
</feature>
<feature type="binding site" evidence="2">
    <location>
        <begin position="81"/>
        <end position="85"/>
    </location>
    <ligand>
        <name>GTP</name>
        <dbReference type="ChEBI" id="CHEBI:37565"/>
    </ligand>
</feature>
<feature type="binding site" evidence="2">
    <location>
        <begin position="136"/>
        <end position="139"/>
    </location>
    <ligand>
        <name>GTP</name>
        <dbReference type="ChEBI" id="CHEBI:37565"/>
    </ligand>
</feature>
<accession>Q6YQV8</accession>
<reference key="1">
    <citation type="journal article" date="2004" name="Nat. Genet.">
        <title>Reductive evolution suggested from the complete genome sequence of a plant-pathogenic phytoplasma.</title>
        <authorList>
            <person name="Oshima K."/>
            <person name="Kakizawa S."/>
            <person name="Nishigawa H."/>
            <person name="Jung H.-Y."/>
            <person name="Wei W."/>
            <person name="Suzuki S."/>
            <person name="Arashida R."/>
            <person name="Nakata D."/>
            <person name="Miyata S."/>
            <person name="Ugaki M."/>
            <person name="Namba S."/>
        </authorList>
    </citation>
    <scope>NUCLEOTIDE SEQUENCE [LARGE SCALE GENOMIC DNA]</scope>
    <source>
        <strain>OY-M</strain>
    </source>
</reference>
<evidence type="ECO:0000250" key="1"/>
<evidence type="ECO:0000255" key="2">
    <source>
        <dbReference type="HAMAP-Rule" id="MF_00118"/>
    </source>
</evidence>
<organism>
    <name type="scientific">Onion yellows phytoplasma (strain OY-M)</name>
    <dbReference type="NCBI Taxonomy" id="262768"/>
    <lineage>
        <taxon>Bacteria</taxon>
        <taxon>Bacillati</taxon>
        <taxon>Mycoplasmatota</taxon>
        <taxon>Mollicutes</taxon>
        <taxon>Acholeplasmatales</taxon>
        <taxon>Acholeplasmataceae</taxon>
        <taxon>Candidatus Phytoplasma</taxon>
        <taxon>16SrI (Aster yellows group)</taxon>
    </lineage>
</organism>
<keyword id="KW-0963">Cytoplasm</keyword>
<keyword id="KW-0251">Elongation factor</keyword>
<keyword id="KW-0342">GTP-binding</keyword>
<keyword id="KW-0378">Hydrolase</keyword>
<keyword id="KW-0460">Magnesium</keyword>
<keyword id="KW-0479">Metal-binding</keyword>
<keyword id="KW-0547">Nucleotide-binding</keyword>
<keyword id="KW-0648">Protein biosynthesis</keyword>
<name>EFTU_ONYPE</name>